<organism>
    <name type="scientific">Staphylococcus haemolyticus (strain JCSC1435)</name>
    <dbReference type="NCBI Taxonomy" id="279808"/>
    <lineage>
        <taxon>Bacteria</taxon>
        <taxon>Bacillati</taxon>
        <taxon>Bacillota</taxon>
        <taxon>Bacilli</taxon>
        <taxon>Bacillales</taxon>
        <taxon>Staphylococcaceae</taxon>
        <taxon>Staphylococcus</taxon>
    </lineage>
</organism>
<accession>Q4L7L1</accession>
<reference key="1">
    <citation type="journal article" date="2005" name="J. Bacteriol.">
        <title>Whole-genome sequencing of Staphylococcus haemolyticus uncovers the extreme plasticity of its genome and the evolution of human-colonizing staphylococcal species.</title>
        <authorList>
            <person name="Takeuchi F."/>
            <person name="Watanabe S."/>
            <person name="Baba T."/>
            <person name="Yuzawa H."/>
            <person name="Ito T."/>
            <person name="Morimoto Y."/>
            <person name="Kuroda M."/>
            <person name="Cui L."/>
            <person name="Takahashi M."/>
            <person name="Ankai A."/>
            <person name="Baba S."/>
            <person name="Fukui S."/>
            <person name="Lee J.C."/>
            <person name="Hiramatsu K."/>
        </authorList>
    </citation>
    <scope>NUCLEOTIDE SEQUENCE [LARGE SCALE GENOMIC DNA]</scope>
    <source>
        <strain>JCSC1435</strain>
    </source>
</reference>
<name>DAGK_STAHJ</name>
<protein>
    <recommendedName>
        <fullName>Diacylglycerol kinase</fullName>
        <shortName>DAG kinase</shortName>
        <shortName>DAGK</shortName>
        <ecNumber evidence="2">2.7.1.107</ecNumber>
    </recommendedName>
</protein>
<proteinExistence type="inferred from homology"/>
<comment type="function">
    <text evidence="2">Catalyzes the phosphorylation of diacylglycerol (DAG) into phosphatidic acid. Is a key enzyme involved in the production of lipoteichoic acid by reintroducing DAG formed from the breakdown of membrane phospholipids into the phosphatidylglycerol biosynthetic pathway.</text>
</comment>
<comment type="catalytic activity">
    <reaction evidence="2">
        <text>a 1,2-diacyl-sn-glycerol + ATP = a 1,2-diacyl-sn-glycero-3-phosphate + ADP + H(+)</text>
        <dbReference type="Rhea" id="RHEA:10272"/>
        <dbReference type="ChEBI" id="CHEBI:15378"/>
        <dbReference type="ChEBI" id="CHEBI:17815"/>
        <dbReference type="ChEBI" id="CHEBI:30616"/>
        <dbReference type="ChEBI" id="CHEBI:58608"/>
        <dbReference type="ChEBI" id="CHEBI:456216"/>
        <dbReference type="EC" id="2.7.1.107"/>
    </reaction>
</comment>
<comment type="cofactor">
    <cofactor evidence="2">
        <name>Mg(2+)</name>
        <dbReference type="ChEBI" id="CHEBI:18420"/>
    </cofactor>
    <text evidence="2">Binds 1 Mg(2+) ion per subunit. This ion appears to have a structural role and is required for catalytic activity.</text>
</comment>
<comment type="subunit">
    <text evidence="2">Homodimer.</text>
</comment>
<comment type="similarity">
    <text evidence="4">Belongs to the diacylglycerol/lipid kinase family.</text>
</comment>
<feature type="chain" id="PRO_0000386502" description="Diacylglycerol kinase">
    <location>
        <begin position="1"/>
        <end position="330"/>
    </location>
</feature>
<feature type="domain" description="DAGKc" evidence="3">
    <location>
        <begin position="1"/>
        <end position="132"/>
    </location>
</feature>
<feature type="active site" description="Proton acceptor" evidence="2">
    <location>
        <position position="273"/>
    </location>
</feature>
<feature type="binding site" evidence="3">
    <location>
        <begin position="10"/>
        <end position="14"/>
    </location>
    <ligand>
        <name>ATP</name>
        <dbReference type="ChEBI" id="CHEBI:30616"/>
    </ligand>
</feature>
<feature type="binding site" evidence="3">
    <location>
        <position position="41"/>
    </location>
    <ligand>
        <name>ATP</name>
        <dbReference type="ChEBI" id="CHEBI:30616"/>
    </ligand>
</feature>
<feature type="binding site" evidence="3">
    <location>
        <begin position="67"/>
        <end position="73"/>
    </location>
    <ligand>
        <name>ATP</name>
        <dbReference type="ChEBI" id="CHEBI:30616"/>
    </ligand>
</feature>
<feature type="binding site" evidence="3">
    <location>
        <position position="94"/>
    </location>
    <ligand>
        <name>ATP</name>
        <dbReference type="ChEBI" id="CHEBI:30616"/>
    </ligand>
</feature>
<feature type="binding site" evidence="2">
    <location>
        <position position="213"/>
    </location>
    <ligand>
        <name>Mg(2+)</name>
        <dbReference type="ChEBI" id="CHEBI:18420"/>
    </ligand>
</feature>
<feature type="binding site" evidence="2">
    <location>
        <position position="216"/>
    </location>
    <ligand>
        <name>Mg(2+)</name>
        <dbReference type="ChEBI" id="CHEBI:18420"/>
    </ligand>
</feature>
<feature type="binding site" evidence="1">
    <location>
        <position position="218"/>
    </location>
    <ligand>
        <name>Mg(2+)</name>
        <dbReference type="ChEBI" id="CHEBI:18420"/>
    </ligand>
</feature>
<dbReference type="EC" id="2.7.1.107" evidence="2"/>
<dbReference type="EMBL" id="AP006716">
    <property type="protein sequence ID" value="BAE04364.1"/>
    <property type="molecule type" value="Genomic_DNA"/>
</dbReference>
<dbReference type="RefSeq" id="WP_011275360.1">
    <property type="nucleotide sequence ID" value="NC_007168.1"/>
</dbReference>
<dbReference type="SMR" id="Q4L7L1"/>
<dbReference type="KEGG" id="sha:SH1055"/>
<dbReference type="eggNOG" id="COG1597">
    <property type="taxonomic scope" value="Bacteria"/>
</dbReference>
<dbReference type="HOGENOM" id="CLU_045532_1_0_9"/>
<dbReference type="OrthoDB" id="142078at2"/>
<dbReference type="Proteomes" id="UP000000543">
    <property type="component" value="Chromosome"/>
</dbReference>
<dbReference type="GO" id="GO:0005886">
    <property type="term" value="C:plasma membrane"/>
    <property type="evidence" value="ECO:0007669"/>
    <property type="project" value="TreeGrafter"/>
</dbReference>
<dbReference type="GO" id="GO:0005524">
    <property type="term" value="F:ATP binding"/>
    <property type="evidence" value="ECO:0007669"/>
    <property type="project" value="UniProtKB-KW"/>
</dbReference>
<dbReference type="GO" id="GO:0004143">
    <property type="term" value="F:ATP-dependent diacylglycerol kinase activity"/>
    <property type="evidence" value="ECO:0007669"/>
    <property type="project" value="UniProtKB-EC"/>
</dbReference>
<dbReference type="GO" id="GO:0046872">
    <property type="term" value="F:metal ion binding"/>
    <property type="evidence" value="ECO:0007669"/>
    <property type="project" value="UniProtKB-KW"/>
</dbReference>
<dbReference type="GO" id="GO:0008654">
    <property type="term" value="P:phospholipid biosynthetic process"/>
    <property type="evidence" value="ECO:0007669"/>
    <property type="project" value="UniProtKB-KW"/>
</dbReference>
<dbReference type="FunFam" id="2.60.200.40:FF:000015">
    <property type="entry name" value="Diacylglycerol kinase"/>
    <property type="match status" value="1"/>
</dbReference>
<dbReference type="FunFam" id="3.40.50.10330:FF:000008">
    <property type="entry name" value="Probable lipid kinase YegS"/>
    <property type="match status" value="1"/>
</dbReference>
<dbReference type="Gene3D" id="2.60.200.40">
    <property type="match status" value="1"/>
</dbReference>
<dbReference type="Gene3D" id="3.40.50.10330">
    <property type="entry name" value="Probable inorganic polyphosphate/atp-NAD kinase, domain 1"/>
    <property type="match status" value="1"/>
</dbReference>
<dbReference type="InterPro" id="IPR017438">
    <property type="entry name" value="ATP-NAD_kinase_N"/>
</dbReference>
<dbReference type="InterPro" id="IPR005218">
    <property type="entry name" value="Diacylglycerol/lipid_kinase"/>
</dbReference>
<dbReference type="InterPro" id="IPR001206">
    <property type="entry name" value="Diacylglycerol_kinase_cat_dom"/>
</dbReference>
<dbReference type="InterPro" id="IPR050187">
    <property type="entry name" value="Lipid_Phosphate_FormReg"/>
</dbReference>
<dbReference type="InterPro" id="IPR016064">
    <property type="entry name" value="NAD/diacylglycerol_kinase_sf"/>
</dbReference>
<dbReference type="InterPro" id="IPR045540">
    <property type="entry name" value="YegS/DAGK_C"/>
</dbReference>
<dbReference type="NCBIfam" id="NF009603">
    <property type="entry name" value="PRK13055.1"/>
    <property type="match status" value="1"/>
</dbReference>
<dbReference type="NCBIfam" id="NF009874">
    <property type="entry name" value="PRK13337.1"/>
    <property type="match status" value="1"/>
</dbReference>
<dbReference type="NCBIfam" id="TIGR00147">
    <property type="entry name" value="YegS/Rv2252/BmrU family lipid kinase"/>
    <property type="match status" value="1"/>
</dbReference>
<dbReference type="PANTHER" id="PTHR12358:SF106">
    <property type="entry name" value="LIPID KINASE YEGS"/>
    <property type="match status" value="1"/>
</dbReference>
<dbReference type="PANTHER" id="PTHR12358">
    <property type="entry name" value="SPHINGOSINE KINASE"/>
    <property type="match status" value="1"/>
</dbReference>
<dbReference type="Pfam" id="PF00781">
    <property type="entry name" value="DAGK_cat"/>
    <property type="match status" value="1"/>
</dbReference>
<dbReference type="Pfam" id="PF19279">
    <property type="entry name" value="YegS_C"/>
    <property type="match status" value="1"/>
</dbReference>
<dbReference type="SMART" id="SM00046">
    <property type="entry name" value="DAGKc"/>
    <property type="match status" value="1"/>
</dbReference>
<dbReference type="SUPFAM" id="SSF111331">
    <property type="entry name" value="NAD kinase/diacylglycerol kinase-like"/>
    <property type="match status" value="1"/>
</dbReference>
<dbReference type="PROSITE" id="PS50146">
    <property type="entry name" value="DAGK"/>
    <property type="match status" value="1"/>
</dbReference>
<gene>
    <name type="primary">dagK</name>
    <name type="ordered locus">SH1055</name>
</gene>
<sequence length="330" mass="36803">MRKCARIIYNPTSGKELFKRTLPDVLIKLERAGYETSAYATEREGDATLEAERALKRDYDIIIAAGGDGTLNEVVNGIAEQPNRPKLGIIPMGTVNDFGRALHLPSDIMGAVDVIIDDHTTKVDIGKMNNRYFINLAAGGQLTQVSYETPSRLKSIVGPFAYYIKGFEMLPQMKAVDLRIEYDNQVFQGEALLFLLGLTNSMAGFEKLVPDAKLDDGHFTLIIVEKANLAELGHIMTLASRGEHIKHPKVIYEKAKSINISSFTEMQLNVDGEYGGKLPANFLNLKRHIEVCTPKDIYNEELTEDQQVEDGIIEEKPSNEEIIKNNEISE</sequence>
<evidence type="ECO:0000250" key="1"/>
<evidence type="ECO:0000250" key="2">
    <source>
        <dbReference type="UniProtKB" id="Q6GFF9"/>
    </source>
</evidence>
<evidence type="ECO:0000255" key="3">
    <source>
        <dbReference type="PROSITE-ProRule" id="PRU00783"/>
    </source>
</evidence>
<evidence type="ECO:0000305" key="4"/>
<keyword id="KW-0067">ATP-binding</keyword>
<keyword id="KW-0418">Kinase</keyword>
<keyword id="KW-0444">Lipid biosynthesis</keyword>
<keyword id="KW-0443">Lipid metabolism</keyword>
<keyword id="KW-0460">Magnesium</keyword>
<keyword id="KW-0479">Metal-binding</keyword>
<keyword id="KW-0547">Nucleotide-binding</keyword>
<keyword id="KW-0594">Phospholipid biosynthesis</keyword>
<keyword id="KW-1208">Phospholipid metabolism</keyword>
<keyword id="KW-0808">Transferase</keyword>